<keyword id="KW-0963">Cytoplasm</keyword>
<keyword id="KW-0648">Protein biosynthesis</keyword>
<keyword id="KW-0663">Pyridoxal phosphate</keyword>
<keyword id="KW-0711">Selenium</keyword>
<keyword id="KW-0808">Transferase</keyword>
<sequence>MRKAMNKLPKIDKIPNLKEFQNYFKPALLDISKSVLEEIRSKNQNETISEQDVINLIKNAYAKFQNIEPKPLINATGVIIHTNLGRSPISEDLIKQATHLMTSYSNLEYGLSSGKRGDRYAYTSYLLKLLFGCEDALIVNNNAAAVFLILNSFADEKEVLVSRGELVEIGGSFRVPEVMKNSGAILKEIGTTNKTHLSDYENSINENTAMILKVHKSNYDIVGFSSEVSINDIAKLTQKRGILNYYDLGSGYVNTLPYSLSKDEPNVKKLIQSGVDIISFSGDKLFGSVQCGIILGKKELINKLKNNQILRMLRVDKMVLSMLNETIKAYLNKDFHLIKPINQIYKTLSELEVQAKKVLENIKLEASIKETKTFVGGGTMPNKSYPSIGLFFKGNANKNEFKFRKYGIIGRIENAEFLLDFRSIFENDIENIIKIINGMSDE</sequence>
<dbReference type="EC" id="2.9.1.1" evidence="1"/>
<dbReference type="EMBL" id="CP000487">
    <property type="protein sequence ID" value="ABK82495.1"/>
    <property type="molecule type" value="Genomic_DNA"/>
</dbReference>
<dbReference type="RefSeq" id="WP_002850566.1">
    <property type="nucleotide sequence ID" value="NC_008599.1"/>
</dbReference>
<dbReference type="SMR" id="A0RR46"/>
<dbReference type="GeneID" id="61065362"/>
<dbReference type="KEGG" id="cff:CFF8240_1546"/>
<dbReference type="PATRIC" id="fig|360106.6.peg.1506"/>
<dbReference type="eggNOG" id="COG1921">
    <property type="taxonomic scope" value="Bacteria"/>
</dbReference>
<dbReference type="HOGENOM" id="CLU_038142_1_0_7"/>
<dbReference type="UniPathway" id="UPA00906">
    <property type="reaction ID" value="UER00896"/>
</dbReference>
<dbReference type="Proteomes" id="UP000000760">
    <property type="component" value="Chromosome"/>
</dbReference>
<dbReference type="GO" id="GO:0005737">
    <property type="term" value="C:cytoplasm"/>
    <property type="evidence" value="ECO:0007669"/>
    <property type="project" value="UniProtKB-SubCell"/>
</dbReference>
<dbReference type="GO" id="GO:0004125">
    <property type="term" value="F:L-seryl-tRNA(Sec) selenium transferase activity"/>
    <property type="evidence" value="ECO:0007669"/>
    <property type="project" value="UniProtKB-UniRule"/>
</dbReference>
<dbReference type="GO" id="GO:0001717">
    <property type="term" value="P:conversion of seryl-tRNAsec to selenocys-tRNAsec"/>
    <property type="evidence" value="ECO:0007669"/>
    <property type="project" value="UniProtKB-UniRule"/>
</dbReference>
<dbReference type="GO" id="GO:0001514">
    <property type="term" value="P:selenocysteine incorporation"/>
    <property type="evidence" value="ECO:0007669"/>
    <property type="project" value="UniProtKB-UniRule"/>
</dbReference>
<dbReference type="Gene3D" id="3.90.1150.180">
    <property type="match status" value="1"/>
</dbReference>
<dbReference type="Gene3D" id="3.40.640.10">
    <property type="entry name" value="Type I PLP-dependent aspartate aminotransferase-like (Major domain)"/>
    <property type="match status" value="1"/>
</dbReference>
<dbReference type="HAMAP" id="MF_00423">
    <property type="entry name" value="SelA"/>
    <property type="match status" value="1"/>
</dbReference>
<dbReference type="InterPro" id="IPR015424">
    <property type="entry name" value="PyrdxlP-dep_Trfase"/>
</dbReference>
<dbReference type="InterPro" id="IPR015421">
    <property type="entry name" value="PyrdxlP-dep_Trfase_major"/>
</dbReference>
<dbReference type="InterPro" id="IPR018319">
    <property type="entry name" value="SelA-like"/>
</dbReference>
<dbReference type="InterPro" id="IPR004534">
    <property type="entry name" value="SelA_trans"/>
</dbReference>
<dbReference type="NCBIfam" id="TIGR00474">
    <property type="entry name" value="selA"/>
    <property type="match status" value="1"/>
</dbReference>
<dbReference type="PANTHER" id="PTHR32328">
    <property type="entry name" value="L-SERYL-TRNA(SEC) SELENIUM TRANSFERASE"/>
    <property type="match status" value="1"/>
</dbReference>
<dbReference type="PANTHER" id="PTHR32328:SF0">
    <property type="entry name" value="L-SERYL-TRNA(SEC) SELENIUM TRANSFERASE"/>
    <property type="match status" value="1"/>
</dbReference>
<dbReference type="Pfam" id="PF03841">
    <property type="entry name" value="SelA"/>
    <property type="match status" value="1"/>
</dbReference>
<dbReference type="SUPFAM" id="SSF53383">
    <property type="entry name" value="PLP-dependent transferases"/>
    <property type="match status" value="1"/>
</dbReference>
<accession>A0RR46</accession>
<organism>
    <name type="scientific">Campylobacter fetus subsp. fetus (strain 82-40)</name>
    <dbReference type="NCBI Taxonomy" id="360106"/>
    <lineage>
        <taxon>Bacteria</taxon>
        <taxon>Pseudomonadati</taxon>
        <taxon>Campylobacterota</taxon>
        <taxon>Epsilonproteobacteria</taxon>
        <taxon>Campylobacterales</taxon>
        <taxon>Campylobacteraceae</taxon>
        <taxon>Campylobacter</taxon>
    </lineage>
</organism>
<proteinExistence type="inferred from homology"/>
<reference key="1">
    <citation type="submission" date="2006-11" db="EMBL/GenBank/DDBJ databases">
        <title>Sequence of Campylobacter fetus subsp. fetus 82-40.</title>
        <authorList>
            <person name="Fouts D.E."/>
            <person name="Nelson K.E."/>
        </authorList>
    </citation>
    <scope>NUCLEOTIDE SEQUENCE [LARGE SCALE GENOMIC DNA]</scope>
    <source>
        <strain>82-40</strain>
    </source>
</reference>
<feature type="chain" id="PRO_1000050356" description="L-seryl-tRNA(Sec) selenium transferase">
    <location>
        <begin position="1"/>
        <end position="442"/>
    </location>
</feature>
<feature type="modified residue" description="N6-(pyridoxal phosphate)lysine" evidence="1">
    <location>
        <position position="284"/>
    </location>
</feature>
<comment type="function">
    <text evidence="1">Converts seryl-tRNA(Sec) to selenocysteinyl-tRNA(Sec) required for selenoprotein biosynthesis.</text>
</comment>
<comment type="catalytic activity">
    <reaction evidence="1">
        <text>L-seryl-tRNA(Sec) + selenophosphate + H(+) = L-selenocysteinyl-tRNA(Sec) + phosphate</text>
        <dbReference type="Rhea" id="RHEA:22728"/>
        <dbReference type="Rhea" id="RHEA-COMP:9742"/>
        <dbReference type="Rhea" id="RHEA-COMP:9743"/>
        <dbReference type="ChEBI" id="CHEBI:15378"/>
        <dbReference type="ChEBI" id="CHEBI:16144"/>
        <dbReference type="ChEBI" id="CHEBI:43474"/>
        <dbReference type="ChEBI" id="CHEBI:78533"/>
        <dbReference type="ChEBI" id="CHEBI:78573"/>
        <dbReference type="EC" id="2.9.1.1"/>
    </reaction>
</comment>
<comment type="cofactor">
    <cofactor evidence="1">
        <name>pyridoxal 5'-phosphate</name>
        <dbReference type="ChEBI" id="CHEBI:597326"/>
    </cofactor>
</comment>
<comment type="pathway">
    <text evidence="1">Aminoacyl-tRNA biosynthesis; selenocysteinyl-tRNA(Sec) biosynthesis; selenocysteinyl-tRNA(Sec) from L-seryl-tRNA(Sec) (bacterial route): step 1/1.</text>
</comment>
<comment type="subcellular location">
    <subcellularLocation>
        <location evidence="1">Cytoplasm</location>
    </subcellularLocation>
</comment>
<comment type="similarity">
    <text evidence="1">Belongs to the SelA family.</text>
</comment>
<evidence type="ECO:0000255" key="1">
    <source>
        <dbReference type="HAMAP-Rule" id="MF_00423"/>
    </source>
</evidence>
<name>SELA_CAMFF</name>
<protein>
    <recommendedName>
        <fullName evidence="1">L-seryl-tRNA(Sec) selenium transferase</fullName>
        <ecNumber evidence="1">2.9.1.1</ecNumber>
    </recommendedName>
    <alternativeName>
        <fullName evidence="1">Selenocysteine synthase</fullName>
        <shortName evidence="1">Sec synthase</shortName>
    </alternativeName>
    <alternativeName>
        <fullName evidence="1">Selenocysteinyl-tRNA(Sec) synthase</fullName>
    </alternativeName>
</protein>
<gene>
    <name evidence="1" type="primary">selA</name>
    <name type="ordered locus">CFF8240_1546</name>
</gene>